<protein>
    <recommendedName>
        <fullName evidence="1">Glycogen synthase</fullName>
        <ecNumber evidence="1">2.4.1.21</ecNumber>
    </recommendedName>
    <alternativeName>
        <fullName evidence="1">Starch [bacterial glycogen] synthase</fullName>
    </alternativeName>
</protein>
<sequence>MTPAQSYPHLDVLFITPEIHPLNKTGGLGEVSAALPTALSELGMDVRILIPGYPQILNGLKNKQKIAEFAAQSSFPAATLLSARLPFGASGNVPLFIIDCPELYRRDGGPYTDPQGHNWPDNAIRFGLLSKIGAILASDASPLDWHPDVVHCNDWQSGLVPAYLHFHKGTKAASLMVIHNLAFQGVFSPETVSQLGLPQTSFHTEGVEYYGGMSFLKAGLYYCDHIVTVSPTYAREIQVAPLGFGMEGLLSLRHEHITGIVNGISDEWNPVNDPHLEQNYSMDDLSGKVINKAALQQQLGLTVDPDVPLFGAVSRLTYQKGYDLLLRIITQLIDIPGQLVILGSGETMLEQELMRMARNHPGKMAVRIGFDEKLAHLIEAGADCFLMPSRFEPCGLNQMYSQCYGTPPLVHGTGGLLDTVVDCTAESLADGTATGFVFHELTPEAFLGALERAVAAYRDKPVWDRLMRNGMVQDFSWRASATDYRKIYLSLLNQKR</sequence>
<proteinExistence type="inferred from homology"/>
<feature type="chain" id="PRO_0000230250" description="Glycogen synthase">
    <location>
        <begin position="1"/>
        <end position="496"/>
    </location>
</feature>
<feature type="binding site" evidence="1">
    <location>
        <position position="24"/>
    </location>
    <ligand>
        <name>ADP-alpha-D-glucose</name>
        <dbReference type="ChEBI" id="CHEBI:57498"/>
    </ligand>
</feature>
<organism>
    <name type="scientific">Nitrosospira multiformis (strain ATCC 25196 / NCIMB 11849 / C 71)</name>
    <dbReference type="NCBI Taxonomy" id="323848"/>
    <lineage>
        <taxon>Bacteria</taxon>
        <taxon>Pseudomonadati</taxon>
        <taxon>Pseudomonadota</taxon>
        <taxon>Betaproteobacteria</taxon>
        <taxon>Nitrosomonadales</taxon>
        <taxon>Nitrosomonadaceae</taxon>
        <taxon>Nitrosospira</taxon>
    </lineage>
</organism>
<evidence type="ECO:0000255" key="1">
    <source>
        <dbReference type="HAMAP-Rule" id="MF_00484"/>
    </source>
</evidence>
<dbReference type="EC" id="2.4.1.21" evidence="1"/>
<dbReference type="EMBL" id="CP000103">
    <property type="protein sequence ID" value="ABB74023.1"/>
    <property type="molecule type" value="Genomic_DNA"/>
</dbReference>
<dbReference type="RefSeq" id="WP_011380073.1">
    <property type="nucleotide sequence ID" value="NC_007614.1"/>
</dbReference>
<dbReference type="SMR" id="Q2YB48"/>
<dbReference type="STRING" id="323848.Nmul_A0716"/>
<dbReference type="CAZy" id="GT5">
    <property type="family name" value="Glycosyltransferase Family 5"/>
</dbReference>
<dbReference type="KEGG" id="nmu:Nmul_A0716"/>
<dbReference type="eggNOG" id="COG0297">
    <property type="taxonomic scope" value="Bacteria"/>
</dbReference>
<dbReference type="HOGENOM" id="CLU_009583_18_4_4"/>
<dbReference type="OrthoDB" id="9808590at2"/>
<dbReference type="UniPathway" id="UPA00164"/>
<dbReference type="Proteomes" id="UP000002718">
    <property type="component" value="Chromosome"/>
</dbReference>
<dbReference type="GO" id="GO:0009011">
    <property type="term" value="F:alpha-1,4-glucan glucosyltransferase (ADP-glucose donor) activity"/>
    <property type="evidence" value="ECO:0007669"/>
    <property type="project" value="UniProtKB-UniRule"/>
</dbReference>
<dbReference type="GO" id="GO:0004373">
    <property type="term" value="F:alpha-1,4-glucan glucosyltransferase (UDP-glucose donor) activity"/>
    <property type="evidence" value="ECO:0007669"/>
    <property type="project" value="InterPro"/>
</dbReference>
<dbReference type="GO" id="GO:0005978">
    <property type="term" value="P:glycogen biosynthetic process"/>
    <property type="evidence" value="ECO:0007669"/>
    <property type="project" value="UniProtKB-UniRule"/>
</dbReference>
<dbReference type="CDD" id="cd03791">
    <property type="entry name" value="GT5_Glycogen_synthase_DULL1-like"/>
    <property type="match status" value="1"/>
</dbReference>
<dbReference type="Gene3D" id="3.40.50.2000">
    <property type="entry name" value="Glycogen Phosphorylase B"/>
    <property type="match status" value="2"/>
</dbReference>
<dbReference type="HAMAP" id="MF_00484">
    <property type="entry name" value="Glycogen_synth"/>
    <property type="match status" value="1"/>
</dbReference>
<dbReference type="InterPro" id="IPR001296">
    <property type="entry name" value="Glyco_trans_1"/>
</dbReference>
<dbReference type="InterPro" id="IPR011835">
    <property type="entry name" value="GS/SS"/>
</dbReference>
<dbReference type="InterPro" id="IPR013534">
    <property type="entry name" value="Starch_synth_cat_dom"/>
</dbReference>
<dbReference type="NCBIfam" id="TIGR02095">
    <property type="entry name" value="glgA"/>
    <property type="match status" value="1"/>
</dbReference>
<dbReference type="NCBIfam" id="NF001899">
    <property type="entry name" value="PRK00654.1-2"/>
    <property type="match status" value="1"/>
</dbReference>
<dbReference type="PANTHER" id="PTHR45825:SF11">
    <property type="entry name" value="ALPHA AMYLASE DOMAIN-CONTAINING PROTEIN"/>
    <property type="match status" value="1"/>
</dbReference>
<dbReference type="PANTHER" id="PTHR45825">
    <property type="entry name" value="GRANULE-BOUND STARCH SYNTHASE 1, CHLOROPLASTIC/AMYLOPLASTIC"/>
    <property type="match status" value="1"/>
</dbReference>
<dbReference type="Pfam" id="PF08323">
    <property type="entry name" value="Glyco_transf_5"/>
    <property type="match status" value="1"/>
</dbReference>
<dbReference type="Pfam" id="PF00534">
    <property type="entry name" value="Glycos_transf_1"/>
    <property type="match status" value="1"/>
</dbReference>
<dbReference type="SUPFAM" id="SSF53756">
    <property type="entry name" value="UDP-Glycosyltransferase/glycogen phosphorylase"/>
    <property type="match status" value="1"/>
</dbReference>
<accession>Q2YB48</accession>
<reference key="1">
    <citation type="submission" date="2005-08" db="EMBL/GenBank/DDBJ databases">
        <title>Complete sequence of chromosome 1 of Nitrosospira multiformis ATCC 25196.</title>
        <authorList>
            <person name="Copeland A."/>
            <person name="Lucas S."/>
            <person name="Lapidus A."/>
            <person name="Barry K."/>
            <person name="Detter J.C."/>
            <person name="Glavina T."/>
            <person name="Hammon N."/>
            <person name="Israni S."/>
            <person name="Pitluck S."/>
            <person name="Chain P."/>
            <person name="Malfatti S."/>
            <person name="Shin M."/>
            <person name="Vergez L."/>
            <person name="Schmutz J."/>
            <person name="Larimer F."/>
            <person name="Land M."/>
            <person name="Hauser L."/>
            <person name="Kyrpides N."/>
            <person name="Lykidis A."/>
            <person name="Richardson P."/>
        </authorList>
    </citation>
    <scope>NUCLEOTIDE SEQUENCE [LARGE SCALE GENOMIC DNA]</scope>
    <source>
        <strain>ATCC 25196 / NCIMB 11849 / C 71</strain>
    </source>
</reference>
<keyword id="KW-0320">Glycogen biosynthesis</keyword>
<keyword id="KW-0328">Glycosyltransferase</keyword>
<keyword id="KW-1185">Reference proteome</keyword>
<keyword id="KW-0808">Transferase</keyword>
<name>GLGA_NITMU</name>
<gene>
    <name evidence="1" type="primary">glgA</name>
    <name type="ordered locus">Nmul_A0716</name>
</gene>
<comment type="function">
    <text evidence="1">Synthesizes alpha-1,4-glucan chains using ADP-glucose.</text>
</comment>
<comment type="catalytic activity">
    <reaction evidence="1">
        <text>[(1-&gt;4)-alpha-D-glucosyl](n) + ADP-alpha-D-glucose = [(1-&gt;4)-alpha-D-glucosyl](n+1) + ADP + H(+)</text>
        <dbReference type="Rhea" id="RHEA:18189"/>
        <dbReference type="Rhea" id="RHEA-COMP:9584"/>
        <dbReference type="Rhea" id="RHEA-COMP:9587"/>
        <dbReference type="ChEBI" id="CHEBI:15378"/>
        <dbReference type="ChEBI" id="CHEBI:15444"/>
        <dbReference type="ChEBI" id="CHEBI:57498"/>
        <dbReference type="ChEBI" id="CHEBI:456216"/>
        <dbReference type="EC" id="2.4.1.21"/>
    </reaction>
</comment>
<comment type="pathway">
    <text evidence="1">Glycan biosynthesis; glycogen biosynthesis.</text>
</comment>
<comment type="similarity">
    <text evidence="1">Belongs to the glycosyltransferase 1 family. Bacterial/plant glycogen synthase subfamily.</text>
</comment>